<gene>
    <name type="primary">trxC</name>
    <name type="ordered locus">c3107</name>
</gene>
<protein>
    <recommendedName>
        <fullName>Thioredoxin 2</fullName>
        <shortName>Trx-2</shortName>
        <ecNumber>1.8.1.8</ecNumber>
    </recommendedName>
    <alternativeName>
        <fullName>Protein-disulfide reductase</fullName>
    </alternativeName>
</protein>
<comment type="function">
    <text evidence="1">Efficient electron donor for the essential enzyme ribonucleotide reductase. Is also able to reduce the interchain disulfide bridges of insulin (By similarity).</text>
</comment>
<comment type="catalytic activity">
    <reaction>
        <text>[protein]-dithiol + NAD(+) = [protein]-disulfide + NADH + H(+)</text>
        <dbReference type="Rhea" id="RHEA:18749"/>
        <dbReference type="Rhea" id="RHEA-COMP:10593"/>
        <dbReference type="Rhea" id="RHEA-COMP:10594"/>
        <dbReference type="ChEBI" id="CHEBI:15378"/>
        <dbReference type="ChEBI" id="CHEBI:29950"/>
        <dbReference type="ChEBI" id="CHEBI:50058"/>
        <dbReference type="ChEBI" id="CHEBI:57540"/>
        <dbReference type="ChEBI" id="CHEBI:57945"/>
        <dbReference type="EC" id="1.8.1.8"/>
    </reaction>
</comment>
<comment type="catalytic activity">
    <reaction>
        <text>[protein]-dithiol + NADP(+) = [protein]-disulfide + NADPH + H(+)</text>
        <dbReference type="Rhea" id="RHEA:18753"/>
        <dbReference type="Rhea" id="RHEA-COMP:10593"/>
        <dbReference type="Rhea" id="RHEA-COMP:10594"/>
        <dbReference type="ChEBI" id="CHEBI:15378"/>
        <dbReference type="ChEBI" id="CHEBI:29950"/>
        <dbReference type="ChEBI" id="CHEBI:50058"/>
        <dbReference type="ChEBI" id="CHEBI:57783"/>
        <dbReference type="ChEBI" id="CHEBI:58349"/>
        <dbReference type="EC" id="1.8.1.8"/>
    </reaction>
</comment>
<comment type="subcellular location">
    <subcellularLocation>
        <location evidence="1">Cytoplasm</location>
    </subcellularLocation>
</comment>
<comment type="similarity">
    <text evidence="4">Belongs to the thioredoxin family.</text>
</comment>
<feature type="chain" id="PRO_0000120104" description="Thioredoxin 2">
    <location>
        <begin position="1"/>
        <end position="139"/>
    </location>
</feature>
<feature type="domain" description="Thioredoxin" evidence="3">
    <location>
        <begin position="26"/>
        <end position="139"/>
    </location>
</feature>
<feature type="zinc finger region" evidence="2">
    <location>
        <begin position="5"/>
        <end position="18"/>
    </location>
</feature>
<feature type="disulfide bond" description="Redox-active" evidence="3">
    <location>
        <begin position="64"/>
        <end position="67"/>
    </location>
</feature>
<evidence type="ECO:0000250" key="1"/>
<evidence type="ECO:0000255" key="2"/>
<evidence type="ECO:0000255" key="3">
    <source>
        <dbReference type="PROSITE-ProRule" id="PRU00691"/>
    </source>
</evidence>
<evidence type="ECO:0000305" key="4"/>
<name>THIO2_ECOL6</name>
<sequence length="139" mass="15555">MNTVCTHCQAINRIPDDRIEDAAKCGRCGHDLFDGEVINATGETLDKLLKDDLPVVIDFWAPWCGPCRNFAPIFEDVAQERSGKVRFVKVNTEAERELSSRFGIRSIPTIMIFKNGQVVDMLNGAVPKAPFDSWLNESL</sequence>
<organism>
    <name type="scientific">Escherichia coli O6:H1 (strain CFT073 / ATCC 700928 / UPEC)</name>
    <dbReference type="NCBI Taxonomy" id="199310"/>
    <lineage>
        <taxon>Bacteria</taxon>
        <taxon>Pseudomonadati</taxon>
        <taxon>Pseudomonadota</taxon>
        <taxon>Gammaproteobacteria</taxon>
        <taxon>Enterobacterales</taxon>
        <taxon>Enterobacteriaceae</taxon>
        <taxon>Escherichia</taxon>
    </lineage>
</organism>
<accession>P0AGG5</accession>
<accession>P33636</accession>
<accession>P76593</accession>
<accession>P77000</accession>
<accession>P77001</accession>
<proteinExistence type="inferred from homology"/>
<reference key="1">
    <citation type="journal article" date="2002" name="Proc. Natl. Acad. Sci. U.S.A.">
        <title>Extensive mosaic structure revealed by the complete genome sequence of uropathogenic Escherichia coli.</title>
        <authorList>
            <person name="Welch R.A."/>
            <person name="Burland V."/>
            <person name="Plunkett G. III"/>
            <person name="Redford P."/>
            <person name="Roesch P."/>
            <person name="Rasko D."/>
            <person name="Buckles E.L."/>
            <person name="Liou S.-R."/>
            <person name="Boutin A."/>
            <person name="Hackett J."/>
            <person name="Stroud D."/>
            <person name="Mayhew G.F."/>
            <person name="Rose D.J."/>
            <person name="Zhou S."/>
            <person name="Schwartz D.C."/>
            <person name="Perna N.T."/>
            <person name="Mobley H.L.T."/>
            <person name="Donnenberg M.S."/>
            <person name="Blattner F.R."/>
        </authorList>
    </citation>
    <scope>NUCLEOTIDE SEQUENCE [LARGE SCALE GENOMIC DNA]</scope>
    <source>
        <strain>CFT073 / ATCC 700928 / UPEC</strain>
    </source>
</reference>
<dbReference type="EC" id="1.8.1.8"/>
<dbReference type="EMBL" id="AE014075">
    <property type="protein sequence ID" value="AAN81556.1"/>
    <property type="molecule type" value="Genomic_DNA"/>
</dbReference>
<dbReference type="RefSeq" id="WP_001098726.1">
    <property type="nucleotide sequence ID" value="NZ_CP051263.1"/>
</dbReference>
<dbReference type="SMR" id="P0AGG5"/>
<dbReference type="STRING" id="199310.c3107"/>
<dbReference type="GeneID" id="93774504"/>
<dbReference type="KEGG" id="ecc:c3107"/>
<dbReference type="eggNOG" id="COG3118">
    <property type="taxonomic scope" value="Bacteria"/>
</dbReference>
<dbReference type="HOGENOM" id="CLU_090389_10_0_6"/>
<dbReference type="BioCyc" id="ECOL199310:C3107-MONOMER"/>
<dbReference type="Proteomes" id="UP000001410">
    <property type="component" value="Chromosome"/>
</dbReference>
<dbReference type="GO" id="GO:0005829">
    <property type="term" value="C:cytosol"/>
    <property type="evidence" value="ECO:0007669"/>
    <property type="project" value="TreeGrafter"/>
</dbReference>
<dbReference type="GO" id="GO:0047134">
    <property type="term" value="F:protein-disulfide reductase [NAD(P)H] activity"/>
    <property type="evidence" value="ECO:0007669"/>
    <property type="project" value="UniProtKB-EC"/>
</dbReference>
<dbReference type="GO" id="GO:0008270">
    <property type="term" value="F:zinc ion binding"/>
    <property type="evidence" value="ECO:0007669"/>
    <property type="project" value="UniProtKB-KW"/>
</dbReference>
<dbReference type="CDD" id="cd02947">
    <property type="entry name" value="TRX_family"/>
    <property type="match status" value="1"/>
</dbReference>
<dbReference type="FunFam" id="2.30.30.380:FF:000002">
    <property type="entry name" value="Thioredoxin"/>
    <property type="match status" value="1"/>
</dbReference>
<dbReference type="FunFam" id="3.40.30.10:FF:000001">
    <property type="entry name" value="Thioredoxin"/>
    <property type="match status" value="1"/>
</dbReference>
<dbReference type="Gene3D" id="3.40.30.10">
    <property type="entry name" value="Glutaredoxin"/>
    <property type="match status" value="1"/>
</dbReference>
<dbReference type="Gene3D" id="2.30.30.380">
    <property type="entry name" value="Zn-finger domain of Sec23/24"/>
    <property type="match status" value="1"/>
</dbReference>
<dbReference type="InterPro" id="IPR049299">
    <property type="entry name" value="Thio2_N"/>
</dbReference>
<dbReference type="InterPro" id="IPR005746">
    <property type="entry name" value="Thioredoxin"/>
</dbReference>
<dbReference type="InterPro" id="IPR036249">
    <property type="entry name" value="Thioredoxin-like_sf"/>
</dbReference>
<dbReference type="InterPro" id="IPR017937">
    <property type="entry name" value="Thioredoxin_CS"/>
</dbReference>
<dbReference type="InterPro" id="IPR013766">
    <property type="entry name" value="Thioredoxin_domain"/>
</dbReference>
<dbReference type="NCBIfam" id="NF008229">
    <property type="entry name" value="PRK10996.1"/>
    <property type="match status" value="1"/>
</dbReference>
<dbReference type="NCBIfam" id="TIGR01068">
    <property type="entry name" value="thioredoxin"/>
    <property type="match status" value="1"/>
</dbReference>
<dbReference type="PANTHER" id="PTHR45663">
    <property type="entry name" value="GEO12009P1"/>
    <property type="match status" value="1"/>
</dbReference>
<dbReference type="PANTHER" id="PTHR45663:SF40">
    <property type="entry name" value="THIOREDOXIN 2"/>
    <property type="match status" value="1"/>
</dbReference>
<dbReference type="Pfam" id="PF00085">
    <property type="entry name" value="Thioredoxin"/>
    <property type="match status" value="1"/>
</dbReference>
<dbReference type="Pfam" id="PF21352">
    <property type="entry name" value="Zn_ribbon_Thio2"/>
    <property type="match status" value="1"/>
</dbReference>
<dbReference type="PRINTS" id="PR00421">
    <property type="entry name" value="THIOREDOXIN"/>
</dbReference>
<dbReference type="SUPFAM" id="SSF52833">
    <property type="entry name" value="Thioredoxin-like"/>
    <property type="match status" value="1"/>
</dbReference>
<dbReference type="PROSITE" id="PS00194">
    <property type="entry name" value="THIOREDOXIN_1"/>
    <property type="match status" value="1"/>
</dbReference>
<dbReference type="PROSITE" id="PS51352">
    <property type="entry name" value="THIOREDOXIN_2"/>
    <property type="match status" value="1"/>
</dbReference>
<keyword id="KW-0963">Cytoplasm</keyword>
<keyword id="KW-1015">Disulfide bond</keyword>
<keyword id="KW-0249">Electron transport</keyword>
<keyword id="KW-0479">Metal-binding</keyword>
<keyword id="KW-0520">NAD</keyword>
<keyword id="KW-0560">Oxidoreductase</keyword>
<keyword id="KW-0676">Redox-active center</keyword>
<keyword id="KW-1185">Reference proteome</keyword>
<keyword id="KW-0813">Transport</keyword>
<keyword id="KW-0862">Zinc</keyword>
<keyword id="KW-0863">Zinc-finger</keyword>